<feature type="chain" id="PRO_0000096598" description="Protein MSN1">
    <location>
        <begin position="1"/>
        <end position="382"/>
    </location>
</feature>
<feature type="region of interest" description="Leucine-zipper">
    <location>
        <begin position="12"/>
        <end position="26"/>
    </location>
</feature>
<feature type="region of interest" description="Disordered" evidence="2">
    <location>
        <begin position="104"/>
        <end position="138"/>
    </location>
</feature>
<feature type="region of interest" description="Disordered" evidence="2">
    <location>
        <begin position="155"/>
        <end position="260"/>
    </location>
</feature>
<feature type="short sequence motif" description="Nuclear localization signal" evidence="1">
    <location>
        <begin position="266"/>
        <end position="271"/>
    </location>
</feature>
<feature type="compositionally biased region" description="Polar residues" evidence="2">
    <location>
        <begin position="104"/>
        <end position="114"/>
    </location>
</feature>
<feature type="compositionally biased region" description="Polar residues" evidence="2">
    <location>
        <begin position="122"/>
        <end position="138"/>
    </location>
</feature>
<feature type="compositionally biased region" description="Low complexity" evidence="2">
    <location>
        <begin position="162"/>
        <end position="180"/>
    </location>
</feature>
<feature type="compositionally biased region" description="Polar residues" evidence="2">
    <location>
        <begin position="181"/>
        <end position="198"/>
    </location>
</feature>
<feature type="compositionally biased region" description="Polar residues" evidence="2">
    <location>
        <begin position="207"/>
        <end position="221"/>
    </location>
</feature>
<feature type="compositionally biased region" description="Low complexity" evidence="2">
    <location>
        <begin position="222"/>
        <end position="231"/>
    </location>
</feature>
<feature type="compositionally biased region" description="Polar residues" evidence="2">
    <location>
        <begin position="232"/>
        <end position="253"/>
    </location>
</feature>
<feature type="sequence conflict" description="In Ref. 1; CAA38222." evidence="5" ref="1">
    <original>D</original>
    <variation>Y</variation>
    <location>
        <position position="360"/>
    </location>
</feature>
<name>MSN1_YEAST</name>
<protein>
    <recommendedName>
        <fullName>Protein MSN1</fullName>
    </recommendedName>
    <alternativeName>
        <fullName>Multicopy suppressor of SNF1 protein 1</fullName>
    </alternativeName>
</protein>
<proteinExistence type="evidence at protein level"/>
<organism>
    <name type="scientific">Saccharomyces cerevisiae (strain ATCC 204508 / S288c)</name>
    <name type="common">Baker's yeast</name>
    <dbReference type="NCBI Taxonomy" id="559292"/>
    <lineage>
        <taxon>Eukaryota</taxon>
        <taxon>Fungi</taxon>
        <taxon>Dikarya</taxon>
        <taxon>Ascomycota</taxon>
        <taxon>Saccharomycotina</taxon>
        <taxon>Saccharomycetes</taxon>
        <taxon>Saccharomycetales</taxon>
        <taxon>Saccharomycetaceae</taxon>
        <taxon>Saccharomyces</taxon>
    </lineage>
</organism>
<accession>P22148</accession>
<accession>D6W1V1</accession>
<accession>Q12227</accession>
<accession>Q9URF6</accession>
<comment type="function">
    <text evidence="4">May function as a transcriptional activator. Increased dosage of MSN1 restores invertase expression in yeast mutants defective in the SNF1 protein kinase, and msn1 disruption reduced derepression of invertase in the wild-type. May affect SUC2 expression. Expression of MSN1 enhances growth in iron-limiting conditions.</text>
</comment>
<comment type="subcellular location">
    <subcellularLocation>
        <location>Nucleus</location>
    </subcellularLocation>
</comment>
<comment type="miscellaneous">
    <text evidence="3">Present with 491 molecules/cell in log phase SD medium.</text>
</comment>
<gene>
    <name type="primary">MSN1</name>
    <name type="synonym">FUP1</name>
    <name type="synonym">PHD2</name>
    <name type="ordered locus">YOL116W</name>
    <name type="ORF">HRB382</name>
</gene>
<dbReference type="EMBL" id="X54324">
    <property type="protein sequence ID" value="CAA38222.1"/>
    <property type="molecule type" value="Genomic_DNA"/>
</dbReference>
<dbReference type="EMBL" id="Z48149">
    <property type="protein sequence ID" value="CAA88144.1"/>
    <property type="molecule type" value="Genomic_DNA"/>
</dbReference>
<dbReference type="EMBL" id="Z74858">
    <property type="protein sequence ID" value="CAA99135.1"/>
    <property type="molecule type" value="Genomic_DNA"/>
</dbReference>
<dbReference type="EMBL" id="BK006948">
    <property type="protein sequence ID" value="DAA10667.1"/>
    <property type="molecule type" value="Genomic_DNA"/>
</dbReference>
<dbReference type="PIR" id="S51881">
    <property type="entry name" value="S51881"/>
</dbReference>
<dbReference type="RefSeq" id="NP_014525.1">
    <property type="nucleotide sequence ID" value="NM_001183370.1"/>
</dbReference>
<dbReference type="SMR" id="P22148"/>
<dbReference type="BioGRID" id="34284">
    <property type="interactions" value="319"/>
</dbReference>
<dbReference type="DIP" id="DIP-5660N"/>
<dbReference type="FunCoup" id="P22148">
    <property type="interactions" value="332"/>
</dbReference>
<dbReference type="IntAct" id="P22148">
    <property type="interactions" value="6"/>
</dbReference>
<dbReference type="MINT" id="P22148"/>
<dbReference type="STRING" id="4932.YOL116W"/>
<dbReference type="iPTMnet" id="P22148"/>
<dbReference type="PaxDb" id="4932-YOL116W"/>
<dbReference type="PeptideAtlas" id="P22148"/>
<dbReference type="EnsemblFungi" id="YOL116W_mRNA">
    <property type="protein sequence ID" value="YOL116W"/>
    <property type="gene ID" value="YOL116W"/>
</dbReference>
<dbReference type="GeneID" id="854033"/>
<dbReference type="KEGG" id="sce:YOL116W"/>
<dbReference type="AGR" id="SGD:S000005476"/>
<dbReference type="SGD" id="S000005476">
    <property type="gene designation" value="MSN1"/>
</dbReference>
<dbReference type="VEuPathDB" id="FungiDB:YOL116W"/>
<dbReference type="eggNOG" id="ENOG502RNWJ">
    <property type="taxonomic scope" value="Eukaryota"/>
</dbReference>
<dbReference type="HOGENOM" id="CLU_030906_0_0_1"/>
<dbReference type="InParanoid" id="P22148"/>
<dbReference type="OMA" id="QPIGWLC"/>
<dbReference type="OrthoDB" id="428577at2759"/>
<dbReference type="BioCyc" id="YEAST:G3O-33513-MONOMER"/>
<dbReference type="BioGRID-ORCS" id="854033">
    <property type="hits" value="8 hits in 13 CRISPR screens"/>
</dbReference>
<dbReference type="PRO" id="PR:P22148"/>
<dbReference type="Proteomes" id="UP000002311">
    <property type="component" value="Chromosome XV"/>
</dbReference>
<dbReference type="RNAct" id="P22148">
    <property type="molecule type" value="protein"/>
</dbReference>
<dbReference type="GO" id="GO:0005737">
    <property type="term" value="C:cytoplasm"/>
    <property type="evidence" value="ECO:0007005"/>
    <property type="project" value="SGD"/>
</dbReference>
<dbReference type="GO" id="GO:0005634">
    <property type="term" value="C:nucleus"/>
    <property type="evidence" value="ECO:0000314"/>
    <property type="project" value="SGD"/>
</dbReference>
<dbReference type="GO" id="GO:0000981">
    <property type="term" value="F:DNA-binding transcription factor activity, RNA polymerase II-specific"/>
    <property type="evidence" value="ECO:0000318"/>
    <property type="project" value="GO_Central"/>
</dbReference>
<dbReference type="GO" id="GO:0000978">
    <property type="term" value="F:RNA polymerase II cis-regulatory region sequence-specific DNA binding"/>
    <property type="evidence" value="ECO:0000318"/>
    <property type="project" value="GO_Central"/>
</dbReference>
<dbReference type="GO" id="GO:0043565">
    <property type="term" value="F:sequence-specific DNA binding"/>
    <property type="evidence" value="ECO:0000314"/>
    <property type="project" value="SGD"/>
</dbReference>
<dbReference type="GO" id="GO:0071475">
    <property type="term" value="P:cellular hyperosmotic salinity response"/>
    <property type="evidence" value="ECO:0000315"/>
    <property type="project" value="SGD"/>
</dbReference>
<dbReference type="GO" id="GO:0034605">
    <property type="term" value="P:cellular response to heat"/>
    <property type="evidence" value="ECO:0000315"/>
    <property type="project" value="SGD"/>
</dbReference>
<dbReference type="GO" id="GO:0097238">
    <property type="term" value="P:cellular response to methylglyoxal"/>
    <property type="evidence" value="ECO:0000315"/>
    <property type="project" value="SGD"/>
</dbReference>
<dbReference type="GO" id="GO:2000219">
    <property type="term" value="P:positive regulation of invasive growth in response to glucose limitation"/>
    <property type="evidence" value="ECO:0000315"/>
    <property type="project" value="SGD"/>
</dbReference>
<dbReference type="GO" id="GO:2000222">
    <property type="term" value="P:positive regulation of pseudohyphal growth"/>
    <property type="evidence" value="ECO:0000315"/>
    <property type="project" value="SGD"/>
</dbReference>
<dbReference type="GO" id="GO:0060963">
    <property type="term" value="P:positive regulation of ribosomal protein gene transcription by RNA polymerase II"/>
    <property type="evidence" value="ECO:0000318"/>
    <property type="project" value="GO_Central"/>
</dbReference>
<dbReference type="GO" id="GO:2000883">
    <property type="term" value="P:positive regulation of starch catabolic process"/>
    <property type="evidence" value="ECO:0000315"/>
    <property type="project" value="SGD"/>
</dbReference>
<dbReference type="GO" id="GO:0045944">
    <property type="term" value="P:positive regulation of transcription by RNA polymerase II"/>
    <property type="evidence" value="ECO:0000315"/>
    <property type="project" value="SGD"/>
</dbReference>
<dbReference type="InterPro" id="IPR052146">
    <property type="entry name" value="HOT1"/>
</dbReference>
<dbReference type="InterPro" id="IPR022210">
    <property type="entry name" value="TF_GCR1-like"/>
</dbReference>
<dbReference type="PANTHER" id="PTHR37784">
    <property type="entry name" value="PROTEIN MSN1"/>
    <property type="match status" value="1"/>
</dbReference>
<dbReference type="PANTHER" id="PTHR37784:SF8">
    <property type="entry name" value="PROTEIN MSN1"/>
    <property type="match status" value="1"/>
</dbReference>
<dbReference type="Pfam" id="PF12550">
    <property type="entry name" value="GCR1_C"/>
    <property type="match status" value="1"/>
</dbReference>
<reference key="1">
    <citation type="journal article" date="1990" name="Nucleic Acids Res.">
        <title>Increased dosage of the MSN1 gene restores invertase expression in yeast mutants defective in the SNF1 protein kinase.</title>
        <authorList>
            <person name="Estruch F."/>
            <person name="Carlson M."/>
        </authorList>
    </citation>
    <scope>NUCLEOTIDE SEQUENCE [GENOMIC DNA]</scope>
    <source>
        <strain>ATCC 204508 / S288c</strain>
    </source>
</reference>
<reference key="2">
    <citation type="journal article" date="1992" name="J. Gen. Microbiol.">
        <title>Increased dosage of a transcriptional activator gene enhances iron-limited growth of Saccharomyces cerevisiae.</title>
        <authorList>
            <person name="Eide D."/>
            <person name="Guarente L."/>
        </authorList>
    </citation>
    <scope>NUCLEOTIDE SEQUENCE [GENOMIC DNA]</scope>
    <scope>FUNCTION</scope>
</reference>
<reference key="3">
    <citation type="journal article" date="1995" name="Yeast">
        <title>Sequence analysis of a 44 kb DNA fragment of yeast chromosome XV including the Ty1-H3 retrotransposon, the suf1(+) frameshift suppressor gene for tRNA-Gly, the yeast transfer RNA-Thr-1a and a delta element.</title>
        <authorList>
            <person name="Vandenbol M."/>
            <person name="Durand P."/>
            <person name="Portetelle D."/>
            <person name="Hilger F."/>
        </authorList>
    </citation>
    <scope>NUCLEOTIDE SEQUENCE [GENOMIC DNA]</scope>
</reference>
<reference key="4">
    <citation type="journal article" date="1997" name="Nature">
        <title>The nucleotide sequence of Saccharomyces cerevisiae chromosome XV.</title>
        <authorList>
            <person name="Dujon B."/>
            <person name="Albermann K."/>
            <person name="Aldea M."/>
            <person name="Alexandraki D."/>
            <person name="Ansorge W."/>
            <person name="Arino J."/>
            <person name="Benes V."/>
            <person name="Bohn C."/>
            <person name="Bolotin-Fukuhara M."/>
            <person name="Bordonne R."/>
            <person name="Boyer J."/>
            <person name="Camasses A."/>
            <person name="Casamayor A."/>
            <person name="Casas C."/>
            <person name="Cheret G."/>
            <person name="Cziepluch C."/>
            <person name="Daignan-Fornier B."/>
            <person name="Dang V.-D."/>
            <person name="de Haan M."/>
            <person name="Delius H."/>
            <person name="Durand P."/>
            <person name="Fairhead C."/>
            <person name="Feldmann H."/>
            <person name="Gaillon L."/>
            <person name="Galisson F."/>
            <person name="Gamo F.-J."/>
            <person name="Gancedo C."/>
            <person name="Goffeau A."/>
            <person name="Goulding S.E."/>
            <person name="Grivell L.A."/>
            <person name="Habbig B."/>
            <person name="Hand N.J."/>
            <person name="Hani J."/>
            <person name="Hattenhorst U."/>
            <person name="Hebling U."/>
            <person name="Hernando Y."/>
            <person name="Herrero E."/>
            <person name="Heumann K."/>
            <person name="Hiesel R."/>
            <person name="Hilger F."/>
            <person name="Hofmann B."/>
            <person name="Hollenberg C.P."/>
            <person name="Hughes B."/>
            <person name="Jauniaux J.-C."/>
            <person name="Kalogeropoulos A."/>
            <person name="Katsoulou C."/>
            <person name="Kordes E."/>
            <person name="Lafuente M.J."/>
            <person name="Landt O."/>
            <person name="Louis E.J."/>
            <person name="Maarse A.C."/>
            <person name="Madania A."/>
            <person name="Mannhaupt G."/>
            <person name="Marck C."/>
            <person name="Martin R.P."/>
            <person name="Mewes H.-W."/>
            <person name="Michaux G."/>
            <person name="Paces V."/>
            <person name="Parle-McDermott A.G."/>
            <person name="Pearson B.M."/>
            <person name="Perrin A."/>
            <person name="Pettersson B."/>
            <person name="Poch O."/>
            <person name="Pohl T.M."/>
            <person name="Poirey R."/>
            <person name="Portetelle D."/>
            <person name="Pujol A."/>
            <person name="Purnelle B."/>
            <person name="Ramezani Rad M."/>
            <person name="Rechmann S."/>
            <person name="Schwager C."/>
            <person name="Schweizer M."/>
            <person name="Sor F."/>
            <person name="Sterky F."/>
            <person name="Tarassov I.A."/>
            <person name="Teodoru C."/>
            <person name="Tettelin H."/>
            <person name="Thierry A."/>
            <person name="Tobiasch E."/>
            <person name="Tzermia M."/>
            <person name="Uhlen M."/>
            <person name="Unseld M."/>
            <person name="Valens M."/>
            <person name="Vandenbol M."/>
            <person name="Vetter I."/>
            <person name="Vlcek C."/>
            <person name="Voet M."/>
            <person name="Volckaert G."/>
            <person name="Voss H."/>
            <person name="Wambutt R."/>
            <person name="Wedler H."/>
            <person name="Wiemann S."/>
            <person name="Winsor B."/>
            <person name="Wolfe K.H."/>
            <person name="Zollner A."/>
            <person name="Zumstein E."/>
            <person name="Kleine K."/>
        </authorList>
    </citation>
    <scope>NUCLEOTIDE SEQUENCE [LARGE SCALE GENOMIC DNA]</scope>
    <source>
        <strain>ATCC 204508 / S288c</strain>
    </source>
</reference>
<reference key="5">
    <citation type="journal article" date="2014" name="G3 (Bethesda)">
        <title>The reference genome sequence of Saccharomyces cerevisiae: Then and now.</title>
        <authorList>
            <person name="Engel S.R."/>
            <person name="Dietrich F.S."/>
            <person name="Fisk D.G."/>
            <person name="Binkley G."/>
            <person name="Balakrishnan R."/>
            <person name="Costanzo M.C."/>
            <person name="Dwight S.S."/>
            <person name="Hitz B.C."/>
            <person name="Karra K."/>
            <person name="Nash R.S."/>
            <person name="Weng S."/>
            <person name="Wong E.D."/>
            <person name="Lloyd P."/>
            <person name="Skrzypek M.S."/>
            <person name="Miyasato S.R."/>
            <person name="Simison M."/>
            <person name="Cherry J.M."/>
        </authorList>
    </citation>
    <scope>GENOME REANNOTATION</scope>
    <source>
        <strain>ATCC 204508 / S288c</strain>
    </source>
</reference>
<reference key="6">
    <citation type="journal article" date="2003" name="Nature">
        <title>Global analysis of protein expression in yeast.</title>
        <authorList>
            <person name="Ghaemmaghami S."/>
            <person name="Huh W.-K."/>
            <person name="Bower K."/>
            <person name="Howson R.W."/>
            <person name="Belle A."/>
            <person name="Dephoure N."/>
            <person name="O'Shea E.K."/>
            <person name="Weissman J.S."/>
        </authorList>
    </citation>
    <scope>LEVEL OF PROTEIN EXPRESSION [LARGE SCALE ANALYSIS]</scope>
</reference>
<reference key="7">
    <citation type="journal article" date="2008" name="Mol. Cell. Proteomics">
        <title>A multidimensional chromatography technology for in-depth phosphoproteome analysis.</title>
        <authorList>
            <person name="Albuquerque C.P."/>
            <person name="Smolka M.B."/>
            <person name="Payne S.H."/>
            <person name="Bafna V."/>
            <person name="Eng J."/>
            <person name="Zhou H."/>
        </authorList>
    </citation>
    <scope>IDENTIFICATION BY MASS SPECTROMETRY [LARGE SCALE ANALYSIS]</scope>
</reference>
<reference key="8">
    <citation type="journal article" date="2009" name="Science">
        <title>Global analysis of Cdk1 substrate phosphorylation sites provides insights into evolution.</title>
        <authorList>
            <person name="Holt L.J."/>
            <person name="Tuch B.B."/>
            <person name="Villen J."/>
            <person name="Johnson A.D."/>
            <person name="Gygi S.P."/>
            <person name="Morgan D.O."/>
        </authorList>
    </citation>
    <scope>IDENTIFICATION BY MASS SPECTROMETRY [LARGE SCALE ANALYSIS]</scope>
</reference>
<evidence type="ECO:0000255" key="1"/>
<evidence type="ECO:0000256" key="2">
    <source>
        <dbReference type="SAM" id="MobiDB-lite"/>
    </source>
</evidence>
<evidence type="ECO:0000269" key="3">
    <source>
    </source>
</evidence>
<evidence type="ECO:0000269" key="4">
    <source>
    </source>
</evidence>
<evidence type="ECO:0000305" key="5"/>
<sequence>MASNQHIGASNLNENEAILTNRVAELERRMSMFEGIFHALSNRLDLHFKKYDVVVNSQQQQINELTAFLSTLLNDQQRHAEILSEKLSGTLHGVSATSISLSQTLDPQGFTDGTTAPGAPRNYTSVPMNNDQTAHPQNEGAVSNETLFEDILNGNSQENDKSQQQTNSSNSISQENNSTNPSVDTRFNKPQNYNSNLVPSLEEYSANPPNNDGGQSQGLYISSNSSQSRQSPNLQKVSPNHENAVESNAQESVPTFEEEQYETKTGLKRKRIVCTRPFEFIKSPHSVMEVWKEYTEGVNGQPSIRKMEALYQTAWRRDPAVNKRYSRRKVLWKAIQTGLNRGYSLNYVVEILENSRYVNDKQKVKQPIGWLCHSSHIPETLK</sequence>
<keyword id="KW-0010">Activator</keyword>
<keyword id="KW-0238">DNA-binding</keyword>
<keyword id="KW-0539">Nucleus</keyword>
<keyword id="KW-1185">Reference proteome</keyword>
<keyword id="KW-0804">Transcription</keyword>
<keyword id="KW-0805">Transcription regulation</keyword>